<accession>B9MJT3</accession>
<sequence length="399" mass="44600">MKVLVLNSGSSSLKYQFIDTDTEVALCKGVVDRIGLPGAFIRHQKNGQEIVKEQEINDHNVAIKLVLEMLTHEEAGIIHSMDEIDAIGHRVVHGGEYFSDAVIVNEEVKKAIRECIELAPLHNPANLMGIEACEKEIPGKPNVAVFDTAFHQTMPRYAYMYSLPYEVYEKYKIRKYGFHGTSHKYVAIKAAEYLRRPLEELKLITCHLGNGSSVCAIKYGKSVDTSMGFTPLAGLAMGTRSGTIDPAVILYLMEKEKMDVKQMNDFLNKKSGVLGISGVSSDFRDLEKAANEGNERAQLAIDMFCYRVKKYIGEYAAVLGGVDAIIFTAGIGENNALVRDKCLTDLEYMGVLYDRERNFNVEKGKVFEINKPESKVKVLIVPTNEELMIARETKRLLSK</sequence>
<feature type="chain" id="PRO_1000116791" description="Acetate kinase">
    <location>
        <begin position="1"/>
        <end position="399"/>
    </location>
</feature>
<feature type="active site" description="Proton donor/acceptor" evidence="1">
    <location>
        <position position="147"/>
    </location>
</feature>
<feature type="binding site" evidence="1">
    <location>
        <position position="7"/>
    </location>
    <ligand>
        <name>Mg(2+)</name>
        <dbReference type="ChEBI" id="CHEBI:18420"/>
    </ligand>
</feature>
<feature type="binding site" evidence="1">
    <location>
        <position position="14"/>
    </location>
    <ligand>
        <name>ATP</name>
        <dbReference type="ChEBI" id="CHEBI:30616"/>
    </ligand>
</feature>
<feature type="binding site" evidence="1">
    <location>
        <position position="90"/>
    </location>
    <ligand>
        <name>substrate</name>
    </ligand>
</feature>
<feature type="binding site" evidence="1">
    <location>
        <begin position="207"/>
        <end position="211"/>
    </location>
    <ligand>
        <name>ATP</name>
        <dbReference type="ChEBI" id="CHEBI:30616"/>
    </ligand>
</feature>
<feature type="binding site" evidence="1">
    <location>
        <begin position="282"/>
        <end position="284"/>
    </location>
    <ligand>
        <name>ATP</name>
        <dbReference type="ChEBI" id="CHEBI:30616"/>
    </ligand>
</feature>
<feature type="binding site" evidence="1">
    <location>
        <begin position="330"/>
        <end position="334"/>
    </location>
    <ligand>
        <name>ATP</name>
        <dbReference type="ChEBI" id="CHEBI:30616"/>
    </ligand>
</feature>
<feature type="binding site" evidence="1">
    <location>
        <position position="385"/>
    </location>
    <ligand>
        <name>Mg(2+)</name>
        <dbReference type="ChEBI" id="CHEBI:18420"/>
    </ligand>
</feature>
<feature type="site" description="Transition state stabilizer" evidence="1">
    <location>
        <position position="179"/>
    </location>
</feature>
<feature type="site" description="Transition state stabilizer" evidence="1">
    <location>
        <position position="240"/>
    </location>
</feature>
<organism>
    <name type="scientific">Caldicellulosiruptor bescii (strain ATCC BAA-1888 / DSM 6725 / KCTC 15123 / Z-1320)</name>
    <name type="common">Anaerocellum thermophilum</name>
    <dbReference type="NCBI Taxonomy" id="521460"/>
    <lineage>
        <taxon>Bacteria</taxon>
        <taxon>Bacillati</taxon>
        <taxon>Bacillota</taxon>
        <taxon>Bacillota incertae sedis</taxon>
        <taxon>Caldicellulosiruptorales</taxon>
        <taxon>Caldicellulosiruptoraceae</taxon>
        <taxon>Caldicellulosiruptor</taxon>
    </lineage>
</organism>
<protein>
    <recommendedName>
        <fullName evidence="1">Acetate kinase</fullName>
        <ecNumber evidence="1">2.7.2.1</ecNumber>
    </recommendedName>
    <alternativeName>
        <fullName evidence="1">Acetokinase</fullName>
    </alternativeName>
</protein>
<keyword id="KW-0067">ATP-binding</keyword>
<keyword id="KW-0963">Cytoplasm</keyword>
<keyword id="KW-0418">Kinase</keyword>
<keyword id="KW-0460">Magnesium</keyword>
<keyword id="KW-0479">Metal-binding</keyword>
<keyword id="KW-0547">Nucleotide-binding</keyword>
<keyword id="KW-0808">Transferase</keyword>
<name>ACKA_CALBD</name>
<comment type="function">
    <text evidence="1">Catalyzes the formation of acetyl phosphate from acetate and ATP. Can also catalyze the reverse reaction.</text>
</comment>
<comment type="catalytic activity">
    <reaction evidence="1">
        <text>acetate + ATP = acetyl phosphate + ADP</text>
        <dbReference type="Rhea" id="RHEA:11352"/>
        <dbReference type="ChEBI" id="CHEBI:22191"/>
        <dbReference type="ChEBI" id="CHEBI:30089"/>
        <dbReference type="ChEBI" id="CHEBI:30616"/>
        <dbReference type="ChEBI" id="CHEBI:456216"/>
        <dbReference type="EC" id="2.7.2.1"/>
    </reaction>
</comment>
<comment type="cofactor">
    <cofactor evidence="1">
        <name>Mg(2+)</name>
        <dbReference type="ChEBI" id="CHEBI:18420"/>
    </cofactor>
    <cofactor evidence="1">
        <name>Mn(2+)</name>
        <dbReference type="ChEBI" id="CHEBI:29035"/>
    </cofactor>
    <text evidence="1">Mg(2+). Can also accept Mn(2+).</text>
</comment>
<comment type="pathway">
    <text evidence="1">Metabolic intermediate biosynthesis; acetyl-CoA biosynthesis; acetyl-CoA from acetate: step 1/2.</text>
</comment>
<comment type="subunit">
    <text evidence="1">Homodimer.</text>
</comment>
<comment type="subcellular location">
    <subcellularLocation>
        <location evidence="1">Cytoplasm</location>
    </subcellularLocation>
</comment>
<comment type="similarity">
    <text evidence="1">Belongs to the acetokinase family.</text>
</comment>
<gene>
    <name evidence="1" type="primary">ackA</name>
    <name type="ordered locus">Athe_1493</name>
</gene>
<dbReference type="EC" id="2.7.2.1" evidence="1"/>
<dbReference type="EMBL" id="CP001393">
    <property type="protein sequence ID" value="ACM60591.1"/>
    <property type="molecule type" value="Genomic_DNA"/>
</dbReference>
<dbReference type="RefSeq" id="WP_013430189.1">
    <property type="nucleotide sequence ID" value="NC_012034.1"/>
</dbReference>
<dbReference type="SMR" id="B9MJT3"/>
<dbReference type="STRING" id="521460.Athe_1493"/>
<dbReference type="GeneID" id="31772838"/>
<dbReference type="KEGG" id="ate:Athe_1493"/>
<dbReference type="eggNOG" id="COG0282">
    <property type="taxonomic scope" value="Bacteria"/>
</dbReference>
<dbReference type="HOGENOM" id="CLU_020352_0_1_9"/>
<dbReference type="UniPathway" id="UPA00340">
    <property type="reaction ID" value="UER00458"/>
</dbReference>
<dbReference type="Proteomes" id="UP000007723">
    <property type="component" value="Chromosome"/>
</dbReference>
<dbReference type="GO" id="GO:0005737">
    <property type="term" value="C:cytoplasm"/>
    <property type="evidence" value="ECO:0007669"/>
    <property type="project" value="UniProtKB-SubCell"/>
</dbReference>
<dbReference type="GO" id="GO:0008776">
    <property type="term" value="F:acetate kinase activity"/>
    <property type="evidence" value="ECO:0007669"/>
    <property type="project" value="UniProtKB-UniRule"/>
</dbReference>
<dbReference type="GO" id="GO:0005524">
    <property type="term" value="F:ATP binding"/>
    <property type="evidence" value="ECO:0007669"/>
    <property type="project" value="UniProtKB-KW"/>
</dbReference>
<dbReference type="GO" id="GO:0000287">
    <property type="term" value="F:magnesium ion binding"/>
    <property type="evidence" value="ECO:0007669"/>
    <property type="project" value="UniProtKB-UniRule"/>
</dbReference>
<dbReference type="GO" id="GO:0006083">
    <property type="term" value="P:acetate metabolic process"/>
    <property type="evidence" value="ECO:0007669"/>
    <property type="project" value="TreeGrafter"/>
</dbReference>
<dbReference type="GO" id="GO:0006085">
    <property type="term" value="P:acetyl-CoA biosynthetic process"/>
    <property type="evidence" value="ECO:0007669"/>
    <property type="project" value="UniProtKB-UniRule"/>
</dbReference>
<dbReference type="CDD" id="cd24010">
    <property type="entry name" value="ASKHA_NBD_AcK_PK"/>
    <property type="match status" value="1"/>
</dbReference>
<dbReference type="Gene3D" id="3.30.420.40">
    <property type="match status" value="2"/>
</dbReference>
<dbReference type="HAMAP" id="MF_00020">
    <property type="entry name" value="Acetate_kinase"/>
    <property type="match status" value="1"/>
</dbReference>
<dbReference type="InterPro" id="IPR004372">
    <property type="entry name" value="Ac/propionate_kinase"/>
</dbReference>
<dbReference type="InterPro" id="IPR000890">
    <property type="entry name" value="Aliphatic_acid_kin_short-chain"/>
</dbReference>
<dbReference type="InterPro" id="IPR023865">
    <property type="entry name" value="Aliphatic_acid_kinase_CS"/>
</dbReference>
<dbReference type="InterPro" id="IPR043129">
    <property type="entry name" value="ATPase_NBD"/>
</dbReference>
<dbReference type="NCBIfam" id="TIGR00016">
    <property type="entry name" value="ackA"/>
    <property type="match status" value="1"/>
</dbReference>
<dbReference type="PANTHER" id="PTHR21060">
    <property type="entry name" value="ACETATE KINASE"/>
    <property type="match status" value="1"/>
</dbReference>
<dbReference type="PANTHER" id="PTHR21060:SF15">
    <property type="entry name" value="ACETATE KINASE-RELATED"/>
    <property type="match status" value="1"/>
</dbReference>
<dbReference type="Pfam" id="PF00871">
    <property type="entry name" value="Acetate_kinase"/>
    <property type="match status" value="1"/>
</dbReference>
<dbReference type="PIRSF" id="PIRSF000722">
    <property type="entry name" value="Acetate_prop_kin"/>
    <property type="match status" value="1"/>
</dbReference>
<dbReference type="PRINTS" id="PR00471">
    <property type="entry name" value="ACETATEKNASE"/>
</dbReference>
<dbReference type="SUPFAM" id="SSF53067">
    <property type="entry name" value="Actin-like ATPase domain"/>
    <property type="match status" value="2"/>
</dbReference>
<dbReference type="PROSITE" id="PS01075">
    <property type="entry name" value="ACETATE_KINASE_1"/>
    <property type="match status" value="1"/>
</dbReference>
<dbReference type="PROSITE" id="PS01076">
    <property type="entry name" value="ACETATE_KINASE_2"/>
    <property type="match status" value="1"/>
</dbReference>
<reference key="1">
    <citation type="submission" date="2009-01" db="EMBL/GenBank/DDBJ databases">
        <title>Complete sequence of chromosome of Caldicellulosiruptor becscii DSM 6725.</title>
        <authorList>
            <person name="Lucas S."/>
            <person name="Copeland A."/>
            <person name="Lapidus A."/>
            <person name="Glavina del Rio T."/>
            <person name="Tice H."/>
            <person name="Bruce D."/>
            <person name="Goodwin L."/>
            <person name="Pitluck S."/>
            <person name="Sims D."/>
            <person name="Meincke L."/>
            <person name="Brettin T."/>
            <person name="Detter J.C."/>
            <person name="Han C."/>
            <person name="Larimer F."/>
            <person name="Land M."/>
            <person name="Hauser L."/>
            <person name="Kyrpides N."/>
            <person name="Ovchinnikova G."/>
            <person name="Kataeva I."/>
            <person name="Adams M.W.W."/>
        </authorList>
    </citation>
    <scope>NUCLEOTIDE SEQUENCE [LARGE SCALE GENOMIC DNA]</scope>
    <source>
        <strain>ATCC BAA-1888 / DSM 6725 / KCTC 15123 / Z-1320</strain>
    </source>
</reference>
<proteinExistence type="inferred from homology"/>
<evidence type="ECO:0000255" key="1">
    <source>
        <dbReference type="HAMAP-Rule" id="MF_00020"/>
    </source>
</evidence>